<protein>
    <recommendedName>
        <fullName evidence="1">Orotate phosphoribosyltransferase</fullName>
        <shortName evidence="1">OPRT</shortName>
        <shortName evidence="1">OPRTase</shortName>
        <ecNumber evidence="1">2.4.2.10</ecNumber>
    </recommendedName>
</protein>
<feature type="chain" id="PRO_1000066293" description="Orotate phosphoribosyltransferase">
    <location>
        <begin position="1"/>
        <end position="213"/>
    </location>
</feature>
<feature type="binding site" description="in other chain" evidence="1">
    <location>
        <position position="26"/>
    </location>
    <ligand>
        <name>5-phospho-alpha-D-ribose 1-diphosphate</name>
        <dbReference type="ChEBI" id="CHEBI:58017"/>
        <note>ligand shared between dimeric partners</note>
    </ligand>
</feature>
<feature type="binding site" evidence="1">
    <location>
        <begin position="34"/>
        <end position="35"/>
    </location>
    <ligand>
        <name>orotate</name>
        <dbReference type="ChEBI" id="CHEBI:30839"/>
    </ligand>
</feature>
<feature type="binding site" description="in other chain" evidence="1">
    <location>
        <begin position="72"/>
        <end position="73"/>
    </location>
    <ligand>
        <name>5-phospho-alpha-D-ribose 1-diphosphate</name>
        <dbReference type="ChEBI" id="CHEBI:58017"/>
        <note>ligand shared between dimeric partners</note>
    </ligand>
</feature>
<feature type="binding site" evidence="1">
    <location>
        <position position="99"/>
    </location>
    <ligand>
        <name>5-phospho-alpha-D-ribose 1-diphosphate</name>
        <dbReference type="ChEBI" id="CHEBI:58017"/>
        <note>ligand shared between dimeric partners</note>
    </ligand>
</feature>
<feature type="binding site" description="in other chain" evidence="1">
    <location>
        <position position="100"/>
    </location>
    <ligand>
        <name>5-phospho-alpha-D-ribose 1-diphosphate</name>
        <dbReference type="ChEBI" id="CHEBI:58017"/>
        <note>ligand shared between dimeric partners</note>
    </ligand>
</feature>
<feature type="binding site" evidence="1">
    <location>
        <position position="103"/>
    </location>
    <ligand>
        <name>5-phospho-alpha-D-ribose 1-diphosphate</name>
        <dbReference type="ChEBI" id="CHEBI:58017"/>
        <note>ligand shared between dimeric partners</note>
    </ligand>
</feature>
<feature type="binding site" evidence="1">
    <location>
        <position position="105"/>
    </location>
    <ligand>
        <name>5-phospho-alpha-D-ribose 1-diphosphate</name>
        <dbReference type="ChEBI" id="CHEBI:58017"/>
        <note>ligand shared between dimeric partners</note>
    </ligand>
</feature>
<feature type="binding site" description="in other chain" evidence="1">
    <location>
        <begin position="124"/>
        <end position="132"/>
    </location>
    <ligand>
        <name>5-phospho-alpha-D-ribose 1-diphosphate</name>
        <dbReference type="ChEBI" id="CHEBI:58017"/>
        <note>ligand shared between dimeric partners</note>
    </ligand>
</feature>
<feature type="binding site" evidence="1">
    <location>
        <position position="128"/>
    </location>
    <ligand>
        <name>orotate</name>
        <dbReference type="ChEBI" id="CHEBI:30839"/>
    </ligand>
</feature>
<feature type="binding site" evidence="1">
    <location>
        <position position="156"/>
    </location>
    <ligand>
        <name>orotate</name>
        <dbReference type="ChEBI" id="CHEBI:30839"/>
    </ligand>
</feature>
<keyword id="KW-0328">Glycosyltransferase</keyword>
<keyword id="KW-0460">Magnesium</keyword>
<keyword id="KW-0665">Pyrimidine biosynthesis</keyword>
<keyword id="KW-0808">Transferase</keyword>
<name>PYRE_SALPA</name>
<proteinExistence type="inferred from homology"/>
<evidence type="ECO:0000255" key="1">
    <source>
        <dbReference type="HAMAP-Rule" id="MF_01208"/>
    </source>
</evidence>
<organism>
    <name type="scientific">Salmonella paratyphi A (strain ATCC 9150 / SARB42)</name>
    <dbReference type="NCBI Taxonomy" id="295319"/>
    <lineage>
        <taxon>Bacteria</taxon>
        <taxon>Pseudomonadati</taxon>
        <taxon>Pseudomonadota</taxon>
        <taxon>Gammaproteobacteria</taxon>
        <taxon>Enterobacterales</taxon>
        <taxon>Enterobacteriaceae</taxon>
        <taxon>Salmonella</taxon>
    </lineage>
</organism>
<comment type="function">
    <text evidence="1">Catalyzes the transfer of a ribosyl phosphate group from 5-phosphoribose 1-diphosphate to orotate, leading to the formation of orotidine monophosphate (OMP).</text>
</comment>
<comment type="catalytic activity">
    <reaction evidence="1">
        <text>orotidine 5'-phosphate + diphosphate = orotate + 5-phospho-alpha-D-ribose 1-diphosphate</text>
        <dbReference type="Rhea" id="RHEA:10380"/>
        <dbReference type="ChEBI" id="CHEBI:30839"/>
        <dbReference type="ChEBI" id="CHEBI:33019"/>
        <dbReference type="ChEBI" id="CHEBI:57538"/>
        <dbReference type="ChEBI" id="CHEBI:58017"/>
        <dbReference type="EC" id="2.4.2.10"/>
    </reaction>
</comment>
<comment type="cofactor">
    <cofactor evidence="1">
        <name>Mg(2+)</name>
        <dbReference type="ChEBI" id="CHEBI:18420"/>
    </cofactor>
</comment>
<comment type="pathway">
    <text evidence="1">Pyrimidine metabolism; UMP biosynthesis via de novo pathway; UMP from orotate: step 1/2.</text>
</comment>
<comment type="subunit">
    <text evidence="1">Homodimer.</text>
</comment>
<comment type="similarity">
    <text evidence="1">Belongs to the purine/pyrimidine phosphoribosyltransferase family. PyrE subfamily.</text>
</comment>
<dbReference type="EC" id="2.4.2.10" evidence="1"/>
<dbReference type="EMBL" id="CP000026">
    <property type="protein sequence ID" value="AAV79386.1"/>
    <property type="molecule type" value="Genomic_DNA"/>
</dbReference>
<dbReference type="RefSeq" id="WP_000806168.1">
    <property type="nucleotide sequence ID" value="NC_006511.1"/>
</dbReference>
<dbReference type="SMR" id="Q5PC26"/>
<dbReference type="KEGG" id="spt:SPA3585"/>
<dbReference type="HOGENOM" id="CLU_074878_0_1_6"/>
<dbReference type="UniPathway" id="UPA00070">
    <property type="reaction ID" value="UER00119"/>
</dbReference>
<dbReference type="Proteomes" id="UP000008185">
    <property type="component" value="Chromosome"/>
</dbReference>
<dbReference type="GO" id="GO:0005737">
    <property type="term" value="C:cytoplasm"/>
    <property type="evidence" value="ECO:0007669"/>
    <property type="project" value="TreeGrafter"/>
</dbReference>
<dbReference type="GO" id="GO:0000287">
    <property type="term" value="F:magnesium ion binding"/>
    <property type="evidence" value="ECO:0007669"/>
    <property type="project" value="UniProtKB-UniRule"/>
</dbReference>
<dbReference type="GO" id="GO:0004588">
    <property type="term" value="F:orotate phosphoribosyltransferase activity"/>
    <property type="evidence" value="ECO:0007669"/>
    <property type="project" value="UniProtKB-UniRule"/>
</dbReference>
<dbReference type="GO" id="GO:0006207">
    <property type="term" value="P:'de novo' pyrimidine nucleobase biosynthetic process"/>
    <property type="evidence" value="ECO:0007669"/>
    <property type="project" value="TreeGrafter"/>
</dbReference>
<dbReference type="GO" id="GO:0044205">
    <property type="term" value="P:'de novo' UMP biosynthetic process"/>
    <property type="evidence" value="ECO:0007669"/>
    <property type="project" value="UniProtKB-UniRule"/>
</dbReference>
<dbReference type="GO" id="GO:0046132">
    <property type="term" value="P:pyrimidine ribonucleoside biosynthetic process"/>
    <property type="evidence" value="ECO:0007669"/>
    <property type="project" value="TreeGrafter"/>
</dbReference>
<dbReference type="CDD" id="cd06223">
    <property type="entry name" value="PRTases_typeI"/>
    <property type="match status" value="1"/>
</dbReference>
<dbReference type="FunFam" id="3.40.50.2020:FF:000008">
    <property type="entry name" value="Orotate phosphoribosyltransferase"/>
    <property type="match status" value="1"/>
</dbReference>
<dbReference type="Gene3D" id="3.40.50.2020">
    <property type="match status" value="1"/>
</dbReference>
<dbReference type="HAMAP" id="MF_01208">
    <property type="entry name" value="PyrE"/>
    <property type="match status" value="1"/>
</dbReference>
<dbReference type="InterPro" id="IPR023031">
    <property type="entry name" value="OPRT"/>
</dbReference>
<dbReference type="InterPro" id="IPR004467">
    <property type="entry name" value="Or_phspho_trans_dom"/>
</dbReference>
<dbReference type="InterPro" id="IPR000836">
    <property type="entry name" value="PRibTrfase_dom"/>
</dbReference>
<dbReference type="InterPro" id="IPR029057">
    <property type="entry name" value="PRTase-like"/>
</dbReference>
<dbReference type="NCBIfam" id="TIGR00336">
    <property type="entry name" value="pyrE"/>
    <property type="match status" value="1"/>
</dbReference>
<dbReference type="PANTHER" id="PTHR46683">
    <property type="entry name" value="OROTATE PHOSPHORIBOSYLTRANSFERASE 1-RELATED"/>
    <property type="match status" value="1"/>
</dbReference>
<dbReference type="PANTHER" id="PTHR46683:SF1">
    <property type="entry name" value="OROTATE PHOSPHORIBOSYLTRANSFERASE 1-RELATED"/>
    <property type="match status" value="1"/>
</dbReference>
<dbReference type="Pfam" id="PF00156">
    <property type="entry name" value="Pribosyltran"/>
    <property type="match status" value="1"/>
</dbReference>
<dbReference type="SUPFAM" id="SSF53271">
    <property type="entry name" value="PRTase-like"/>
    <property type="match status" value="1"/>
</dbReference>
<dbReference type="PROSITE" id="PS00103">
    <property type="entry name" value="PUR_PYR_PR_TRANSFER"/>
    <property type="match status" value="1"/>
</dbReference>
<reference key="1">
    <citation type="journal article" date="2004" name="Nat. Genet.">
        <title>Comparison of genome degradation in Paratyphi A and Typhi, human-restricted serovars of Salmonella enterica that cause typhoid.</title>
        <authorList>
            <person name="McClelland M."/>
            <person name="Sanderson K.E."/>
            <person name="Clifton S.W."/>
            <person name="Latreille P."/>
            <person name="Porwollik S."/>
            <person name="Sabo A."/>
            <person name="Meyer R."/>
            <person name="Bieri T."/>
            <person name="Ozersky P."/>
            <person name="McLellan M."/>
            <person name="Harkins C.R."/>
            <person name="Wang C."/>
            <person name="Nguyen C."/>
            <person name="Berghoff A."/>
            <person name="Elliott G."/>
            <person name="Kohlberg S."/>
            <person name="Strong C."/>
            <person name="Du F."/>
            <person name="Carter J."/>
            <person name="Kremizki C."/>
            <person name="Layman D."/>
            <person name="Leonard S."/>
            <person name="Sun H."/>
            <person name="Fulton L."/>
            <person name="Nash W."/>
            <person name="Miner T."/>
            <person name="Minx P."/>
            <person name="Delehaunty K."/>
            <person name="Fronick C."/>
            <person name="Magrini V."/>
            <person name="Nhan M."/>
            <person name="Warren W."/>
            <person name="Florea L."/>
            <person name="Spieth J."/>
            <person name="Wilson R.K."/>
        </authorList>
    </citation>
    <scope>NUCLEOTIDE SEQUENCE [LARGE SCALE GENOMIC DNA]</scope>
    <source>
        <strain>ATCC 9150 / SARB42</strain>
    </source>
</reference>
<gene>
    <name evidence="1" type="primary">pyrE</name>
    <name type="ordered locus">SPA3585</name>
</gene>
<sequence>MKPYQRQFIEFALNKQVLKFGEFTLKSGRKSPYFFNAGLFNTGRDLALLGRFYAEALVDSGIEFDLLFGPAYKGIPIATTTAVALAEHHDKDLPYCFNRKEAKDHGEGGSLVGSALQGRVMLVDDVITAGTAIRESMEIIQAHRATLAGVLISLDRQERGRGEISAIQEVERDYGCKVISIITLKDLIAYLEEKLDMAEHLAAVRAYREEFGV</sequence>
<accession>Q5PC26</accession>